<keyword id="KW-0068">Autocatalytic cleavage</keyword>
<keyword id="KW-0227">DNA damage</keyword>
<keyword id="KW-0234">DNA repair</keyword>
<keyword id="KW-0235">DNA replication</keyword>
<keyword id="KW-0238">DNA-binding</keyword>
<keyword id="KW-0378">Hydrolase</keyword>
<keyword id="KW-0678">Repressor</keyword>
<keyword id="KW-0742">SOS response</keyword>
<keyword id="KW-0804">Transcription</keyword>
<keyword id="KW-0805">Transcription regulation</keyword>
<evidence type="ECO:0000255" key="1">
    <source>
        <dbReference type="HAMAP-Rule" id="MF_00015"/>
    </source>
</evidence>
<dbReference type="EC" id="3.4.21.88" evidence="1"/>
<dbReference type="EMBL" id="CP001252">
    <property type="protein sequence ID" value="ACK48581.1"/>
    <property type="molecule type" value="Genomic_DNA"/>
</dbReference>
<dbReference type="RefSeq" id="WP_006084613.1">
    <property type="nucleotide sequence ID" value="NC_011663.1"/>
</dbReference>
<dbReference type="SMR" id="B8ECL9"/>
<dbReference type="MEROPS" id="S24.001"/>
<dbReference type="GeneID" id="11774286"/>
<dbReference type="KEGG" id="sbp:Sbal223_4110"/>
<dbReference type="HOGENOM" id="CLU_066192_45_3_6"/>
<dbReference type="Proteomes" id="UP000002507">
    <property type="component" value="Chromosome"/>
</dbReference>
<dbReference type="GO" id="GO:0003677">
    <property type="term" value="F:DNA binding"/>
    <property type="evidence" value="ECO:0007669"/>
    <property type="project" value="UniProtKB-UniRule"/>
</dbReference>
<dbReference type="GO" id="GO:0004252">
    <property type="term" value="F:serine-type endopeptidase activity"/>
    <property type="evidence" value="ECO:0007669"/>
    <property type="project" value="UniProtKB-UniRule"/>
</dbReference>
<dbReference type="GO" id="GO:0006281">
    <property type="term" value="P:DNA repair"/>
    <property type="evidence" value="ECO:0007669"/>
    <property type="project" value="UniProtKB-UniRule"/>
</dbReference>
<dbReference type="GO" id="GO:0006260">
    <property type="term" value="P:DNA replication"/>
    <property type="evidence" value="ECO:0007669"/>
    <property type="project" value="UniProtKB-UniRule"/>
</dbReference>
<dbReference type="GO" id="GO:0045892">
    <property type="term" value="P:negative regulation of DNA-templated transcription"/>
    <property type="evidence" value="ECO:0007669"/>
    <property type="project" value="UniProtKB-UniRule"/>
</dbReference>
<dbReference type="GO" id="GO:0006508">
    <property type="term" value="P:proteolysis"/>
    <property type="evidence" value="ECO:0007669"/>
    <property type="project" value="InterPro"/>
</dbReference>
<dbReference type="GO" id="GO:0009432">
    <property type="term" value="P:SOS response"/>
    <property type="evidence" value="ECO:0007669"/>
    <property type="project" value="UniProtKB-UniRule"/>
</dbReference>
<dbReference type="CDD" id="cd06529">
    <property type="entry name" value="S24_LexA-like"/>
    <property type="match status" value="1"/>
</dbReference>
<dbReference type="FunFam" id="1.10.10.10:FF:000009">
    <property type="entry name" value="LexA repressor"/>
    <property type="match status" value="1"/>
</dbReference>
<dbReference type="FunFam" id="2.10.109.10:FF:000001">
    <property type="entry name" value="LexA repressor"/>
    <property type="match status" value="1"/>
</dbReference>
<dbReference type="Gene3D" id="2.10.109.10">
    <property type="entry name" value="Umud Fragment, subunit A"/>
    <property type="match status" value="1"/>
</dbReference>
<dbReference type="Gene3D" id="1.10.10.10">
    <property type="entry name" value="Winged helix-like DNA-binding domain superfamily/Winged helix DNA-binding domain"/>
    <property type="match status" value="1"/>
</dbReference>
<dbReference type="HAMAP" id="MF_00015">
    <property type="entry name" value="LexA"/>
    <property type="match status" value="1"/>
</dbReference>
<dbReference type="InterPro" id="IPR006200">
    <property type="entry name" value="LexA"/>
</dbReference>
<dbReference type="InterPro" id="IPR039418">
    <property type="entry name" value="LexA-like"/>
</dbReference>
<dbReference type="InterPro" id="IPR036286">
    <property type="entry name" value="LexA/Signal_pep-like_sf"/>
</dbReference>
<dbReference type="InterPro" id="IPR006199">
    <property type="entry name" value="LexA_DNA-bd_dom"/>
</dbReference>
<dbReference type="InterPro" id="IPR050077">
    <property type="entry name" value="LexA_repressor"/>
</dbReference>
<dbReference type="InterPro" id="IPR006197">
    <property type="entry name" value="Peptidase_S24_LexA"/>
</dbReference>
<dbReference type="InterPro" id="IPR015927">
    <property type="entry name" value="Peptidase_S24_S26A/B/C"/>
</dbReference>
<dbReference type="InterPro" id="IPR036388">
    <property type="entry name" value="WH-like_DNA-bd_sf"/>
</dbReference>
<dbReference type="InterPro" id="IPR036390">
    <property type="entry name" value="WH_DNA-bd_sf"/>
</dbReference>
<dbReference type="NCBIfam" id="TIGR00498">
    <property type="entry name" value="lexA"/>
    <property type="match status" value="1"/>
</dbReference>
<dbReference type="PANTHER" id="PTHR33516">
    <property type="entry name" value="LEXA REPRESSOR"/>
    <property type="match status" value="1"/>
</dbReference>
<dbReference type="PANTHER" id="PTHR33516:SF2">
    <property type="entry name" value="LEXA REPRESSOR-RELATED"/>
    <property type="match status" value="1"/>
</dbReference>
<dbReference type="Pfam" id="PF01726">
    <property type="entry name" value="LexA_DNA_bind"/>
    <property type="match status" value="1"/>
</dbReference>
<dbReference type="Pfam" id="PF00717">
    <property type="entry name" value="Peptidase_S24"/>
    <property type="match status" value="1"/>
</dbReference>
<dbReference type="PRINTS" id="PR00726">
    <property type="entry name" value="LEXASERPTASE"/>
</dbReference>
<dbReference type="SUPFAM" id="SSF51306">
    <property type="entry name" value="LexA/Signal peptidase"/>
    <property type="match status" value="1"/>
</dbReference>
<dbReference type="SUPFAM" id="SSF46785">
    <property type="entry name" value="Winged helix' DNA-binding domain"/>
    <property type="match status" value="1"/>
</dbReference>
<reference key="1">
    <citation type="submission" date="2008-12" db="EMBL/GenBank/DDBJ databases">
        <title>Complete sequence of chromosome of Shewanella baltica OS223.</title>
        <authorList>
            <consortium name="US DOE Joint Genome Institute"/>
            <person name="Lucas S."/>
            <person name="Copeland A."/>
            <person name="Lapidus A."/>
            <person name="Glavina del Rio T."/>
            <person name="Dalin E."/>
            <person name="Tice H."/>
            <person name="Bruce D."/>
            <person name="Goodwin L."/>
            <person name="Pitluck S."/>
            <person name="Chertkov O."/>
            <person name="Meincke L."/>
            <person name="Brettin T."/>
            <person name="Detter J.C."/>
            <person name="Han C."/>
            <person name="Kuske C.R."/>
            <person name="Larimer F."/>
            <person name="Land M."/>
            <person name="Hauser L."/>
            <person name="Kyrpides N."/>
            <person name="Ovchinnikova G."/>
            <person name="Brettar I."/>
            <person name="Rodrigues J."/>
            <person name="Konstantinidis K."/>
            <person name="Tiedje J."/>
        </authorList>
    </citation>
    <scope>NUCLEOTIDE SEQUENCE [LARGE SCALE GENOMIC DNA]</scope>
    <source>
        <strain>OS223</strain>
    </source>
</reference>
<organism>
    <name type="scientific">Shewanella baltica (strain OS223)</name>
    <dbReference type="NCBI Taxonomy" id="407976"/>
    <lineage>
        <taxon>Bacteria</taxon>
        <taxon>Pseudomonadati</taxon>
        <taxon>Pseudomonadota</taxon>
        <taxon>Gammaproteobacteria</taxon>
        <taxon>Alteromonadales</taxon>
        <taxon>Shewanellaceae</taxon>
        <taxon>Shewanella</taxon>
    </lineage>
</organism>
<gene>
    <name evidence="1" type="primary">lexA</name>
    <name type="ordered locus">Sbal223_4110</name>
</gene>
<protein>
    <recommendedName>
        <fullName evidence="1">LexA repressor</fullName>
        <ecNumber evidence="1">3.4.21.88</ecNumber>
    </recommendedName>
</protein>
<proteinExistence type="inferred from homology"/>
<feature type="chain" id="PRO_1000192776" description="LexA repressor">
    <location>
        <begin position="1"/>
        <end position="206"/>
    </location>
</feature>
<feature type="DNA-binding region" description="H-T-H motif" evidence="1">
    <location>
        <begin position="28"/>
        <end position="48"/>
    </location>
</feature>
<feature type="active site" description="For autocatalytic cleavage activity" evidence="1">
    <location>
        <position position="123"/>
    </location>
</feature>
<feature type="active site" description="For autocatalytic cleavage activity" evidence="1">
    <location>
        <position position="160"/>
    </location>
</feature>
<feature type="site" description="Cleavage; by autolysis" evidence="1">
    <location>
        <begin position="88"/>
        <end position="89"/>
    </location>
</feature>
<name>LEXA_SHEB2</name>
<sequence length="206" mass="22635">MRPLTPRQAEILELIKRNIADTGMPPTRAEIATRLGFKSANAAEEHLKALAKKGCIEIMPGTSRGIRLTAEVEEVTETGLPLIGQVAAGEPILAQEHVEQYYQVDPSMFHPAADFLLRVKGDSMKNIGILEGDLLAVHKVQQARNGQVVVARVDDDVTVKRFEKKGNVVYLHAENEDYSPIKVDLGYQSLTIEGLAVGVIRNGDWL</sequence>
<comment type="function">
    <text evidence="1">Represses a number of genes involved in the response to DNA damage (SOS response), including recA and lexA. In the presence of single-stranded DNA, RecA interacts with LexA causing an autocatalytic cleavage which disrupts the DNA-binding part of LexA, leading to derepression of the SOS regulon and eventually DNA repair.</text>
</comment>
<comment type="catalytic activity">
    <reaction evidence="1">
        <text>Hydrolysis of Ala-|-Gly bond in repressor LexA.</text>
        <dbReference type="EC" id="3.4.21.88"/>
    </reaction>
</comment>
<comment type="subunit">
    <text evidence="1">Homodimer.</text>
</comment>
<comment type="similarity">
    <text evidence="1">Belongs to the peptidase S24 family.</text>
</comment>
<accession>B8ECL9</accession>